<sequence length="156" mass="17590">MPRRRVIGQRKILPDPKFGSELLAKFVNILMVDGKKSTAESIVYSALETLAQRSGKSELEAFEVALENVRPTVEVKSRRVGGSTYQVPVEVRPVRRNALAMRWIVEAARKRGDKSMALRLANELSDAADNKGTAVKKREDVHRMAEANKAFAHYRW</sequence>
<feature type="chain" id="PRO_1000081299" description="Small ribosomal subunit protein uS7">
    <location>
        <begin position="1"/>
        <end position="156"/>
    </location>
</feature>
<evidence type="ECO:0000255" key="1">
    <source>
        <dbReference type="HAMAP-Rule" id="MF_00480"/>
    </source>
</evidence>
<evidence type="ECO:0000305" key="2"/>
<reference key="1">
    <citation type="submission" date="2007-11" db="EMBL/GenBank/DDBJ databases">
        <authorList>
            <consortium name="The Salmonella enterica serovar Arizonae Genome Sequencing Project"/>
            <person name="McClelland M."/>
            <person name="Sanderson E.K."/>
            <person name="Porwollik S."/>
            <person name="Spieth J."/>
            <person name="Clifton W.S."/>
            <person name="Fulton R."/>
            <person name="Chunyan W."/>
            <person name="Wollam A."/>
            <person name="Shah N."/>
            <person name="Pepin K."/>
            <person name="Bhonagiri V."/>
            <person name="Nash W."/>
            <person name="Johnson M."/>
            <person name="Thiruvilangam P."/>
            <person name="Wilson R."/>
        </authorList>
    </citation>
    <scope>NUCLEOTIDE SEQUENCE [LARGE SCALE GENOMIC DNA]</scope>
    <source>
        <strain>ATCC BAA-731 / CDC346-86 / RSK2980</strain>
    </source>
</reference>
<keyword id="KW-1185">Reference proteome</keyword>
<keyword id="KW-0687">Ribonucleoprotein</keyword>
<keyword id="KW-0689">Ribosomal protein</keyword>
<keyword id="KW-0694">RNA-binding</keyword>
<keyword id="KW-0699">rRNA-binding</keyword>
<keyword id="KW-0820">tRNA-binding</keyword>
<protein>
    <recommendedName>
        <fullName evidence="1">Small ribosomal subunit protein uS7</fullName>
    </recommendedName>
    <alternativeName>
        <fullName evidence="2">30S ribosomal protein S7</fullName>
    </alternativeName>
</protein>
<comment type="function">
    <text evidence="1">One of the primary rRNA binding proteins, it binds directly to 16S rRNA where it nucleates assembly of the head domain of the 30S subunit. Is located at the subunit interface close to the decoding center, probably blocks exit of the E-site tRNA.</text>
</comment>
<comment type="subunit">
    <text evidence="1">Part of the 30S ribosomal subunit. Contacts proteins S9 and S11.</text>
</comment>
<comment type="similarity">
    <text evidence="1">Belongs to the universal ribosomal protein uS7 family.</text>
</comment>
<dbReference type="EMBL" id="CP000880">
    <property type="protein sequence ID" value="ABX23968.1"/>
    <property type="molecule type" value="Genomic_DNA"/>
</dbReference>
<dbReference type="SMR" id="A9MN38"/>
<dbReference type="STRING" id="41514.SARI_04179"/>
<dbReference type="KEGG" id="ses:SARI_04179"/>
<dbReference type="HOGENOM" id="CLU_072226_1_1_6"/>
<dbReference type="Proteomes" id="UP000002084">
    <property type="component" value="Chromosome"/>
</dbReference>
<dbReference type="GO" id="GO:0015935">
    <property type="term" value="C:small ribosomal subunit"/>
    <property type="evidence" value="ECO:0007669"/>
    <property type="project" value="InterPro"/>
</dbReference>
<dbReference type="GO" id="GO:0019843">
    <property type="term" value="F:rRNA binding"/>
    <property type="evidence" value="ECO:0007669"/>
    <property type="project" value="UniProtKB-UniRule"/>
</dbReference>
<dbReference type="GO" id="GO:0003735">
    <property type="term" value="F:structural constituent of ribosome"/>
    <property type="evidence" value="ECO:0007669"/>
    <property type="project" value="InterPro"/>
</dbReference>
<dbReference type="GO" id="GO:0000049">
    <property type="term" value="F:tRNA binding"/>
    <property type="evidence" value="ECO:0007669"/>
    <property type="project" value="UniProtKB-UniRule"/>
</dbReference>
<dbReference type="GO" id="GO:0006412">
    <property type="term" value="P:translation"/>
    <property type="evidence" value="ECO:0007669"/>
    <property type="project" value="UniProtKB-UniRule"/>
</dbReference>
<dbReference type="CDD" id="cd14869">
    <property type="entry name" value="uS7_Bacteria"/>
    <property type="match status" value="1"/>
</dbReference>
<dbReference type="FunFam" id="1.10.455.10:FF:000001">
    <property type="entry name" value="30S ribosomal protein S7"/>
    <property type="match status" value="1"/>
</dbReference>
<dbReference type="Gene3D" id="1.10.455.10">
    <property type="entry name" value="Ribosomal protein S7 domain"/>
    <property type="match status" value="1"/>
</dbReference>
<dbReference type="HAMAP" id="MF_00480_B">
    <property type="entry name" value="Ribosomal_uS7_B"/>
    <property type="match status" value="1"/>
</dbReference>
<dbReference type="InterPro" id="IPR000235">
    <property type="entry name" value="Ribosomal_uS7"/>
</dbReference>
<dbReference type="InterPro" id="IPR005717">
    <property type="entry name" value="Ribosomal_uS7_bac/org-type"/>
</dbReference>
<dbReference type="InterPro" id="IPR020606">
    <property type="entry name" value="Ribosomal_uS7_CS"/>
</dbReference>
<dbReference type="InterPro" id="IPR023798">
    <property type="entry name" value="Ribosomal_uS7_dom"/>
</dbReference>
<dbReference type="InterPro" id="IPR036823">
    <property type="entry name" value="Ribosomal_uS7_dom_sf"/>
</dbReference>
<dbReference type="NCBIfam" id="TIGR01029">
    <property type="entry name" value="rpsG_bact"/>
    <property type="match status" value="1"/>
</dbReference>
<dbReference type="PANTHER" id="PTHR11205">
    <property type="entry name" value="RIBOSOMAL PROTEIN S7"/>
    <property type="match status" value="1"/>
</dbReference>
<dbReference type="Pfam" id="PF00177">
    <property type="entry name" value="Ribosomal_S7"/>
    <property type="match status" value="1"/>
</dbReference>
<dbReference type="PIRSF" id="PIRSF002122">
    <property type="entry name" value="RPS7p_RPS7a_RPS5e_RPS7o"/>
    <property type="match status" value="1"/>
</dbReference>
<dbReference type="SUPFAM" id="SSF47973">
    <property type="entry name" value="Ribosomal protein S7"/>
    <property type="match status" value="1"/>
</dbReference>
<dbReference type="PROSITE" id="PS00052">
    <property type="entry name" value="RIBOSOMAL_S7"/>
    <property type="match status" value="1"/>
</dbReference>
<organism>
    <name type="scientific">Salmonella arizonae (strain ATCC BAA-731 / CDC346-86 / RSK2980)</name>
    <dbReference type="NCBI Taxonomy" id="41514"/>
    <lineage>
        <taxon>Bacteria</taxon>
        <taxon>Pseudomonadati</taxon>
        <taxon>Pseudomonadota</taxon>
        <taxon>Gammaproteobacteria</taxon>
        <taxon>Enterobacterales</taxon>
        <taxon>Enterobacteriaceae</taxon>
        <taxon>Salmonella</taxon>
    </lineage>
</organism>
<gene>
    <name evidence="1" type="primary">rpsG</name>
    <name type="ordered locus">SARI_04179</name>
</gene>
<name>RS7_SALAR</name>
<accession>A9MN38</accession>
<proteinExistence type="inferred from homology"/>